<accession>B4Q599</accession>
<accession>Q2XY54</accession>
<accession>Q2XY55</accession>
<sequence length="880" mass="97188">MTLLTSSLLLFSLLTSRLEAIPVLEKSPAHPAHSAHTAHPAHPSPGVRILRAPESLVAPLGDEVVLECETSLQPERFEWSHRSSRSPGAGFKYLRTGTAKANVSQEAAISRLRVLVRPDTLGEYRCVGWFGPLVVTSTTARLELASTSLVDAQEPESPLQWRVSAGNSVLWSCGQQVQSNPSASWSYFRNGVEIKPEFIGTNGNLFLSNVSSESSGSYSCQATNPASGERIQLPGSLQLQVTPEQRSQSKSPHLLKGQPSSQEITIREGSSLLLLCPGVGSPPPTVVWSSPDVVGAVKNKRSKVFGHALEISNTRVHDAGTYICFQDNGVRPALEHYIKVHVEQPPQIVRPPWADLTNEGDRLKLECEATGVPTPEIYWLLNGHSSIDDTEAELSNNFLILHSVLKRHAGYVQCFARNRLGEHSAGTLLQVNPKQIQEPRESGGTHRPNPNQGSKHKQMYPPTPPNVTRLTDESVMLRWMVPRNDGLPIVIFKVQYRMVGKRKNWQTTNDNIPYGKPKWNSELGKSFTASVTDLKPEHTYRFRILAVYSNNDNKESNTSAKFYLQPGAALDPMPVPELLEIEEYSETAVVLHWSLASDADEHLITGYYAYYRPSSSAGEYFKATIEGAHARSFKIAPLETATMYEFKLQSFSAVSASEFSALKQGRTQRPKTSTTEEPTLQMGDRDTTTPSHNETFNMSPMLTGTIGGGAVLILLLISTCLCVCRRRNSRSRGNNPNKPRMAELRDDFVPLGNCSPTKQRQRTRHIHITLNPLAQQQQQALEEKNDTDQDAPYYQRPSSYDYDPALRRMSSSSLRRSQRTLERAGGSNGSNNGNNNNLNQTAEAGAVENPGKPGRVLMKRPRLSSRSENLSSGSLNSVGV</sequence>
<name>IHOG_DROSI</name>
<organism>
    <name type="scientific">Drosophila simulans</name>
    <name type="common">Fruit fly</name>
    <dbReference type="NCBI Taxonomy" id="7240"/>
    <lineage>
        <taxon>Eukaryota</taxon>
        <taxon>Metazoa</taxon>
        <taxon>Ecdysozoa</taxon>
        <taxon>Arthropoda</taxon>
        <taxon>Hexapoda</taxon>
        <taxon>Insecta</taxon>
        <taxon>Pterygota</taxon>
        <taxon>Neoptera</taxon>
        <taxon>Endopterygota</taxon>
        <taxon>Diptera</taxon>
        <taxon>Brachycera</taxon>
        <taxon>Muscomorpha</taxon>
        <taxon>Ephydroidea</taxon>
        <taxon>Drosophilidae</taxon>
        <taxon>Drosophila</taxon>
        <taxon>Sophophora</taxon>
    </lineage>
</organism>
<keyword id="KW-1015">Disulfide bond</keyword>
<keyword id="KW-0325">Glycoprotein</keyword>
<keyword id="KW-0358">Heparin-binding</keyword>
<keyword id="KW-0393">Immunoglobulin domain</keyword>
<keyword id="KW-0472">Membrane</keyword>
<keyword id="KW-0654">Proteoglycan</keyword>
<keyword id="KW-1185">Reference proteome</keyword>
<keyword id="KW-0677">Repeat</keyword>
<keyword id="KW-0732">Signal</keyword>
<keyword id="KW-0812">Transmembrane</keyword>
<keyword id="KW-1133">Transmembrane helix</keyword>
<protein>
    <recommendedName>
        <fullName evidence="1">Interference hedgehog</fullName>
    </recommendedName>
</protein>
<evidence type="ECO:0000250" key="1">
    <source>
        <dbReference type="UniProtKB" id="Q9VM64"/>
    </source>
</evidence>
<evidence type="ECO:0000255" key="2"/>
<evidence type="ECO:0000255" key="3">
    <source>
        <dbReference type="PROSITE-ProRule" id="PRU00114"/>
    </source>
</evidence>
<evidence type="ECO:0000255" key="4">
    <source>
        <dbReference type="PROSITE-ProRule" id="PRU00316"/>
    </source>
</evidence>
<evidence type="ECO:0000256" key="5">
    <source>
        <dbReference type="SAM" id="MobiDB-lite"/>
    </source>
</evidence>
<evidence type="ECO:0000269" key="6">
    <source>
    </source>
</evidence>
<evidence type="ECO:0000305" key="7"/>
<evidence type="ECO:0000312" key="8">
    <source>
        <dbReference type="EMBL" id="ABA86413.1"/>
    </source>
</evidence>
<evidence type="ECO:0000312" key="9">
    <source>
        <dbReference type="EMBL" id="ABA86414.1"/>
    </source>
</evidence>
<evidence type="ECO:0000312" key="10">
    <source>
        <dbReference type="EMBL" id="EDX04032.1"/>
    </source>
</evidence>
<proteinExistence type="inferred from homology"/>
<reference evidence="10" key="1">
    <citation type="journal article" date="2007" name="Nature">
        <title>Evolution of genes and genomes on the Drosophila phylogeny.</title>
        <authorList>
            <consortium name="Drosophila 12 genomes consortium"/>
        </authorList>
    </citation>
    <scope>NUCLEOTIDE SEQUENCE [LARGE SCALE GENOMIC DNA]</scope>
</reference>
<reference evidence="7 9" key="2">
    <citation type="journal article" date="2005" name="Mol. Biol. Evol.">
        <title>Intragenic Hill-Robertson interference influences selection intensity on synonymous mutations in Drosophila.</title>
        <authorList>
            <person name="Comeron J.M."/>
            <person name="Guthrie T.B."/>
        </authorList>
    </citation>
    <scope>NUCLEOTIDE SEQUENCE [GENOMIC DNA] OF 8-874</scope>
    <scope>VARIANTS VAL-308; ASP-368 AND THR-713</scope>
    <source>
        <strain evidence="8">Ky-a</strain>
        <strain evidence="9">Ky-b</strain>
    </source>
</reference>
<dbReference type="EMBL" id="CM000361">
    <property type="protein sequence ID" value="EDX04032.1"/>
    <property type="status" value="ALT_SEQ"/>
    <property type="molecule type" value="Genomic_DNA"/>
</dbReference>
<dbReference type="EMBL" id="DQ138807">
    <property type="protein sequence ID" value="ABA86413.1"/>
    <property type="molecule type" value="Genomic_DNA"/>
</dbReference>
<dbReference type="EMBL" id="DQ138808">
    <property type="protein sequence ID" value="ABA86414.1"/>
    <property type="molecule type" value="Genomic_DNA"/>
</dbReference>
<dbReference type="SMR" id="B4Q599"/>
<dbReference type="STRING" id="7240.B4Q599"/>
<dbReference type="GlyCosmos" id="B4Q599">
    <property type="glycosylation" value="5 sites, No reported glycans"/>
</dbReference>
<dbReference type="OrthoDB" id="9998697at2759"/>
<dbReference type="Proteomes" id="UP000000304">
    <property type="component" value="Chromosome 2L"/>
</dbReference>
<dbReference type="GO" id="GO:0030424">
    <property type="term" value="C:axon"/>
    <property type="evidence" value="ECO:0007669"/>
    <property type="project" value="TreeGrafter"/>
</dbReference>
<dbReference type="GO" id="GO:0009986">
    <property type="term" value="C:cell surface"/>
    <property type="evidence" value="ECO:0007669"/>
    <property type="project" value="EnsemblMetazoa"/>
</dbReference>
<dbReference type="GO" id="GO:0035230">
    <property type="term" value="C:cytoneme"/>
    <property type="evidence" value="ECO:0007669"/>
    <property type="project" value="EnsemblMetazoa"/>
</dbReference>
<dbReference type="GO" id="GO:0016020">
    <property type="term" value="C:membrane"/>
    <property type="evidence" value="ECO:0000250"/>
    <property type="project" value="UniProtKB"/>
</dbReference>
<dbReference type="GO" id="GO:0005886">
    <property type="term" value="C:plasma membrane"/>
    <property type="evidence" value="ECO:0007669"/>
    <property type="project" value="EnsemblMetazoa"/>
</dbReference>
<dbReference type="GO" id="GO:0015026">
    <property type="term" value="F:coreceptor activity"/>
    <property type="evidence" value="ECO:0007669"/>
    <property type="project" value="EnsemblMetazoa"/>
</dbReference>
<dbReference type="GO" id="GO:0097108">
    <property type="term" value="F:hedgehog family protein binding"/>
    <property type="evidence" value="ECO:0007669"/>
    <property type="project" value="EnsemblMetazoa"/>
</dbReference>
<dbReference type="GO" id="GO:0008201">
    <property type="term" value="F:heparin binding"/>
    <property type="evidence" value="ECO:0000250"/>
    <property type="project" value="UniProtKB"/>
</dbReference>
<dbReference type="GO" id="GO:0005113">
    <property type="term" value="F:patched binding"/>
    <property type="evidence" value="ECO:0007669"/>
    <property type="project" value="EnsemblMetazoa"/>
</dbReference>
<dbReference type="GO" id="GO:0042803">
    <property type="term" value="F:protein homodimerization activity"/>
    <property type="evidence" value="ECO:0000250"/>
    <property type="project" value="UniProtKB"/>
</dbReference>
<dbReference type="GO" id="GO:0007411">
    <property type="term" value="P:axon guidance"/>
    <property type="evidence" value="ECO:0007669"/>
    <property type="project" value="TreeGrafter"/>
</dbReference>
<dbReference type="GO" id="GO:0048749">
    <property type="term" value="P:compound eye development"/>
    <property type="evidence" value="ECO:0007669"/>
    <property type="project" value="EnsemblMetazoa"/>
</dbReference>
<dbReference type="GO" id="GO:0035017">
    <property type="term" value="P:cuticle pattern formation"/>
    <property type="evidence" value="ECO:0007669"/>
    <property type="project" value="EnsemblMetazoa"/>
</dbReference>
<dbReference type="GO" id="GO:0034109">
    <property type="term" value="P:homotypic cell-cell adhesion"/>
    <property type="evidence" value="ECO:0007669"/>
    <property type="project" value="EnsemblMetazoa"/>
</dbReference>
<dbReference type="GO" id="GO:0071694">
    <property type="term" value="P:maintenance of protein location in extracellular region"/>
    <property type="evidence" value="ECO:0007669"/>
    <property type="project" value="EnsemblMetazoa"/>
</dbReference>
<dbReference type="GO" id="GO:0007379">
    <property type="term" value="P:segment specification"/>
    <property type="evidence" value="ECO:0007669"/>
    <property type="project" value="EnsemblMetazoa"/>
</dbReference>
<dbReference type="GO" id="GO:0007224">
    <property type="term" value="P:smoothened signaling pathway"/>
    <property type="evidence" value="ECO:0000250"/>
    <property type="project" value="UniProtKB"/>
</dbReference>
<dbReference type="GO" id="GO:0048100">
    <property type="term" value="P:wing disc anterior/posterior pattern formation"/>
    <property type="evidence" value="ECO:0007669"/>
    <property type="project" value="EnsemblMetazoa"/>
</dbReference>
<dbReference type="CDD" id="cd00063">
    <property type="entry name" value="FN3"/>
    <property type="match status" value="2"/>
</dbReference>
<dbReference type="FunFam" id="2.60.40.10:FF:001723">
    <property type="entry name" value="Interference hedgehog"/>
    <property type="match status" value="1"/>
</dbReference>
<dbReference type="FunFam" id="2.60.40.10:FF:001747">
    <property type="entry name" value="Interference hedgehog"/>
    <property type="match status" value="1"/>
</dbReference>
<dbReference type="FunFam" id="2.60.40.10:FF:001773">
    <property type="entry name" value="Interference hedgehog"/>
    <property type="match status" value="1"/>
</dbReference>
<dbReference type="FunFam" id="2.60.40.10:FF:002071">
    <property type="entry name" value="Interference hedgehog"/>
    <property type="match status" value="1"/>
</dbReference>
<dbReference type="FunFam" id="2.60.40.10:FF:002212">
    <property type="entry name" value="Interference hedgehog"/>
    <property type="match status" value="1"/>
</dbReference>
<dbReference type="Gene3D" id="2.60.40.10">
    <property type="entry name" value="Immunoglobulins"/>
    <property type="match status" value="5"/>
</dbReference>
<dbReference type="InterPro" id="IPR003961">
    <property type="entry name" value="FN3_dom"/>
</dbReference>
<dbReference type="InterPro" id="IPR036116">
    <property type="entry name" value="FN3_sf"/>
</dbReference>
<dbReference type="InterPro" id="IPR007110">
    <property type="entry name" value="Ig-like_dom"/>
</dbReference>
<dbReference type="InterPro" id="IPR036179">
    <property type="entry name" value="Ig-like_dom_sf"/>
</dbReference>
<dbReference type="InterPro" id="IPR013783">
    <property type="entry name" value="Ig-like_fold"/>
</dbReference>
<dbReference type="InterPro" id="IPR003599">
    <property type="entry name" value="Ig_sub"/>
</dbReference>
<dbReference type="InterPro" id="IPR003598">
    <property type="entry name" value="Ig_sub2"/>
</dbReference>
<dbReference type="PANTHER" id="PTHR44170:SF33">
    <property type="entry name" value="BROTHER OF IHOG, ISOFORM G-RELATED"/>
    <property type="match status" value="1"/>
</dbReference>
<dbReference type="PANTHER" id="PTHR44170">
    <property type="entry name" value="PROTEIN SIDEKICK"/>
    <property type="match status" value="1"/>
</dbReference>
<dbReference type="Pfam" id="PF00041">
    <property type="entry name" value="fn3"/>
    <property type="match status" value="2"/>
</dbReference>
<dbReference type="Pfam" id="PF13895">
    <property type="entry name" value="Ig_2"/>
    <property type="match status" value="1"/>
</dbReference>
<dbReference type="Pfam" id="PF13927">
    <property type="entry name" value="Ig_3"/>
    <property type="match status" value="2"/>
</dbReference>
<dbReference type="SMART" id="SM00060">
    <property type="entry name" value="FN3"/>
    <property type="match status" value="2"/>
</dbReference>
<dbReference type="SMART" id="SM00409">
    <property type="entry name" value="IG"/>
    <property type="match status" value="4"/>
</dbReference>
<dbReference type="SMART" id="SM00408">
    <property type="entry name" value="IGc2"/>
    <property type="match status" value="3"/>
</dbReference>
<dbReference type="SUPFAM" id="SSF49265">
    <property type="entry name" value="Fibronectin type III"/>
    <property type="match status" value="1"/>
</dbReference>
<dbReference type="SUPFAM" id="SSF48726">
    <property type="entry name" value="Immunoglobulin"/>
    <property type="match status" value="3"/>
</dbReference>
<dbReference type="PROSITE" id="PS50853">
    <property type="entry name" value="FN3"/>
    <property type="match status" value="2"/>
</dbReference>
<dbReference type="PROSITE" id="PS50835">
    <property type="entry name" value="IG_LIKE"/>
    <property type="match status" value="4"/>
</dbReference>
<comment type="function">
    <text evidence="1">Mediates response to the active Hedgehog (Hh) protein signal in embryos, functioning upstream or at the level of patched (ptc).</text>
</comment>
<comment type="subunit">
    <text evidence="1">Homodimer. Heterotetramer; 2 iHog chains bind 2 hh chains when facilitated by heparin, heparin is required to promote high-affinity interactions between hh and iHog (By similarity).</text>
</comment>
<comment type="subcellular location">
    <subcellularLocation>
        <location evidence="2">Membrane</location>
        <topology evidence="1 2">Single-pass type I membrane protein</topology>
    </subcellularLocation>
</comment>
<comment type="domain">
    <text evidence="1">The first fibronectin type-III domain mediates a specific interaction with Hh protein, in vitro. The second fibronectin type-III domain is additionally required for in vivo signaling activity (By similarity).</text>
</comment>
<comment type="similarity">
    <text evidence="2 7">Belongs to the immunoglobulin superfamily. IHOG family.</text>
</comment>
<comment type="sequence caution" evidence="7">
    <conflict type="erroneous gene model prediction">
        <sequence resource="EMBL-CDS" id="EDX04032"/>
    </conflict>
</comment>
<gene>
    <name evidence="1" type="primary">iHog</name>
    <name type="ORF">GD22528</name>
</gene>
<feature type="signal peptide" evidence="2">
    <location>
        <begin position="1"/>
        <end position="20"/>
    </location>
</feature>
<feature type="chain" id="PRO_0000383620" description="Interference hedgehog" evidence="2">
    <location>
        <begin position="21"/>
        <end position="880"/>
    </location>
</feature>
<feature type="topological domain" description="Extracellular" evidence="2">
    <location>
        <begin position="21"/>
        <end position="703"/>
    </location>
</feature>
<feature type="transmembrane region" description="Helical" evidence="2">
    <location>
        <begin position="704"/>
        <end position="724"/>
    </location>
</feature>
<feature type="topological domain" description="Cytoplasmic" evidence="2">
    <location>
        <begin position="725"/>
        <end position="880"/>
    </location>
</feature>
<feature type="domain" description="Ig-like C2-type 1" evidence="2">
    <location>
        <begin position="45"/>
        <end position="142"/>
    </location>
</feature>
<feature type="domain" description="Ig-like C2-type 2" evidence="2">
    <location>
        <begin position="155"/>
        <end position="232"/>
    </location>
</feature>
<feature type="domain" description="Ig-like C2-type 3" evidence="2">
    <location>
        <begin position="252"/>
        <end position="340"/>
    </location>
</feature>
<feature type="domain" description="Ig-like C2-type 4" evidence="2">
    <location>
        <begin position="346"/>
        <end position="432"/>
    </location>
</feature>
<feature type="domain" description="Fibronectin type-III 1" evidence="4">
    <location>
        <begin position="461"/>
        <end position="567"/>
    </location>
</feature>
<feature type="domain" description="Fibronectin type-III 2" evidence="4">
    <location>
        <begin position="575"/>
        <end position="670"/>
    </location>
</feature>
<feature type="region of interest" description="Disordered" evidence="5">
    <location>
        <begin position="429"/>
        <end position="467"/>
    </location>
</feature>
<feature type="region of interest" description="Disordered" evidence="5">
    <location>
        <begin position="662"/>
        <end position="692"/>
    </location>
</feature>
<feature type="region of interest" description="Disordered" evidence="5">
    <location>
        <begin position="728"/>
        <end position="762"/>
    </location>
</feature>
<feature type="region of interest" description="Disordered" evidence="5">
    <location>
        <begin position="775"/>
        <end position="880"/>
    </location>
</feature>
<feature type="compositionally biased region" description="Polar residues" evidence="5">
    <location>
        <begin position="665"/>
        <end position="678"/>
    </location>
</feature>
<feature type="compositionally biased region" description="Low complexity" evidence="5">
    <location>
        <begin position="823"/>
        <end position="837"/>
    </location>
</feature>
<feature type="compositionally biased region" description="Low complexity" evidence="5">
    <location>
        <begin position="864"/>
        <end position="880"/>
    </location>
</feature>
<feature type="binding site" evidence="1">
    <location>
        <position position="497"/>
    </location>
    <ligand>
        <name>heparin</name>
        <dbReference type="ChEBI" id="CHEBI:28304"/>
    </ligand>
</feature>
<feature type="binding site" evidence="1">
    <location>
        <position position="501"/>
    </location>
    <ligand>
        <name>heparin</name>
        <dbReference type="ChEBI" id="CHEBI:28304"/>
    </ligand>
</feature>
<feature type="binding site" evidence="1">
    <location>
        <position position="503"/>
    </location>
    <ligand>
        <name>heparin</name>
        <dbReference type="ChEBI" id="CHEBI:28304"/>
    </ligand>
</feature>
<feature type="binding site" evidence="1">
    <location>
        <position position="541"/>
    </location>
    <ligand>
        <name>heparin</name>
        <dbReference type="ChEBI" id="CHEBI:28304"/>
    </ligand>
</feature>
<feature type="glycosylation site" description="N-linked (GlcNAc...) asparagine" evidence="2">
    <location>
        <position position="102"/>
    </location>
</feature>
<feature type="glycosylation site" description="N-linked (GlcNAc...) asparagine" evidence="2">
    <location>
        <position position="209"/>
    </location>
</feature>
<feature type="glycosylation site" description="N-linked (GlcNAc...) asparagine" evidence="2">
    <location>
        <position position="466"/>
    </location>
</feature>
<feature type="glycosylation site" description="N-linked (GlcNAc...) asparagine" evidence="2">
    <location>
        <position position="557"/>
    </location>
</feature>
<feature type="glycosylation site" description="N-linked (GlcNAc...) asparagine" evidence="2">
    <location>
        <position position="693"/>
    </location>
</feature>
<feature type="disulfide bond" evidence="3">
    <location>
        <begin position="68"/>
        <end position="126"/>
    </location>
</feature>
<feature type="disulfide bond" evidence="3">
    <location>
        <begin position="173"/>
        <end position="220"/>
    </location>
</feature>
<feature type="disulfide bond" evidence="3">
    <location>
        <begin position="276"/>
        <end position="324"/>
    </location>
</feature>
<feature type="disulfide bond" evidence="3">
    <location>
        <begin position="367"/>
        <end position="414"/>
    </location>
</feature>
<feature type="sequence variant" description="In strain: Ky-b." evidence="6">
    <original>A</original>
    <variation>V</variation>
    <location>
        <position position="308"/>
    </location>
</feature>
<feature type="sequence variant" description="In strain: Ky-b." evidence="6">
    <original>E</original>
    <variation>D</variation>
    <location>
        <position position="368"/>
    </location>
</feature>
<feature type="sequence variant" description="In strain: Ky-a." evidence="6">
    <original>I</original>
    <variation>T</variation>
    <location>
        <position position="713"/>
    </location>
</feature>
<feature type="sequence conflict" description="In Ref. 2; ABA86413/ABA86414." evidence="7" ref="2">
    <original>T</original>
    <variation>S</variation>
    <location>
        <position position="37"/>
    </location>
</feature>
<feature type="sequence conflict" description="In Ref. 2; ABA86413/ABA86414." evidence="7" ref="2">
    <original>A</original>
    <variation>S</variation>
    <location>
        <position position="41"/>
    </location>
</feature>
<feature type="sequence conflict" description="In Ref. 2; ABA86413/ABA86414." evidence="7" ref="2">
    <original>PES</original>
    <variation>SEA</variation>
    <location>
        <begin position="155"/>
        <end position="157"/>
    </location>
</feature>
<feature type="sequence conflict" description="In Ref. 2; ABA86413/ABA86414." evidence="7" ref="2">
    <original>N</original>
    <variation>K</variation>
    <location>
        <position position="449"/>
    </location>
</feature>
<feature type="sequence conflict" description="In Ref. 2; ABA86413/ABA86414." evidence="7" ref="2">
    <original>H</original>
    <variation>Q</variation>
    <location>
        <position position="456"/>
    </location>
</feature>
<feature type="sequence conflict" description="In Ref. 2; ABA86413/ABA86414." evidence="7" ref="2">
    <original>T</original>
    <variation>S</variation>
    <location>
        <position position="471"/>
    </location>
</feature>
<feature type="sequence conflict" description="In Ref. 2; ABA86413/ABA86414." evidence="7" ref="2">
    <original>T</original>
    <variation>S</variation>
    <location>
        <position position="841"/>
    </location>
</feature>